<reference key="1">
    <citation type="journal article" date="2009" name="Appl. Environ. Microbiol.">
        <title>Genomic analysis of 'Elusimicrobium minutum,' the first cultivated representative of the phylum 'Elusimicrobia' (formerly termite group 1).</title>
        <authorList>
            <person name="Herlemann D.P.R."/>
            <person name="Geissinger O."/>
            <person name="Ikeda-Ohtsubo W."/>
            <person name="Kunin V."/>
            <person name="Sun H."/>
            <person name="Lapidus A."/>
            <person name="Hugenholtz P."/>
            <person name="Brune A."/>
        </authorList>
    </citation>
    <scope>NUCLEOTIDE SEQUENCE [LARGE SCALE GENOMIC DNA]</scope>
    <source>
        <strain>Pei191</strain>
    </source>
</reference>
<sequence length="152" mass="16675">MKVILRKDVKNLGMVGDIVEVKPGYGRNYLIPQGLAEVATEGAVKNWQLGAERRAKKIEAELKAAQAAASKLKDIVLTFTKSVNTEGVVFGSVNKADIYKALKELGHEIEKENIELNMPVKKLGETDVNIYFKPTVSAVIKVKIEPVVVEAK</sequence>
<evidence type="ECO:0000255" key="1">
    <source>
        <dbReference type="HAMAP-Rule" id="MF_00503"/>
    </source>
</evidence>
<evidence type="ECO:0000305" key="2"/>
<organism>
    <name type="scientific">Elusimicrobium minutum (strain Pei191)</name>
    <dbReference type="NCBI Taxonomy" id="445932"/>
    <lineage>
        <taxon>Bacteria</taxon>
        <taxon>Pseudomonadati</taxon>
        <taxon>Elusimicrobiota</taxon>
        <taxon>Elusimicrobia</taxon>
        <taxon>Elusimicrobiales</taxon>
        <taxon>Elusimicrobiaceae</taxon>
        <taxon>Elusimicrobium</taxon>
    </lineage>
</organism>
<accession>B2KEF9</accession>
<comment type="function">
    <text evidence="1">Binds to the 23S rRNA.</text>
</comment>
<comment type="similarity">
    <text evidence="1">Belongs to the bacterial ribosomal protein bL9 family.</text>
</comment>
<dbReference type="EMBL" id="CP001055">
    <property type="protein sequence ID" value="ACC98905.1"/>
    <property type="molecule type" value="Genomic_DNA"/>
</dbReference>
<dbReference type="RefSeq" id="WP_012415520.1">
    <property type="nucleotide sequence ID" value="NC_010644.1"/>
</dbReference>
<dbReference type="SMR" id="B2KEF9"/>
<dbReference type="STRING" id="445932.Emin_1355"/>
<dbReference type="KEGG" id="emi:Emin_1355"/>
<dbReference type="HOGENOM" id="CLU_078938_3_0_0"/>
<dbReference type="OrthoDB" id="9788336at2"/>
<dbReference type="Proteomes" id="UP000001029">
    <property type="component" value="Chromosome"/>
</dbReference>
<dbReference type="GO" id="GO:1990904">
    <property type="term" value="C:ribonucleoprotein complex"/>
    <property type="evidence" value="ECO:0007669"/>
    <property type="project" value="UniProtKB-KW"/>
</dbReference>
<dbReference type="GO" id="GO:0005840">
    <property type="term" value="C:ribosome"/>
    <property type="evidence" value="ECO:0007669"/>
    <property type="project" value="UniProtKB-KW"/>
</dbReference>
<dbReference type="GO" id="GO:0019843">
    <property type="term" value="F:rRNA binding"/>
    <property type="evidence" value="ECO:0007669"/>
    <property type="project" value="UniProtKB-UniRule"/>
</dbReference>
<dbReference type="GO" id="GO:0003735">
    <property type="term" value="F:structural constituent of ribosome"/>
    <property type="evidence" value="ECO:0007669"/>
    <property type="project" value="InterPro"/>
</dbReference>
<dbReference type="GO" id="GO:0006412">
    <property type="term" value="P:translation"/>
    <property type="evidence" value="ECO:0007669"/>
    <property type="project" value="UniProtKB-UniRule"/>
</dbReference>
<dbReference type="FunFam" id="3.40.5.10:FF:000003">
    <property type="entry name" value="50S ribosomal protein L9"/>
    <property type="match status" value="1"/>
</dbReference>
<dbReference type="Gene3D" id="3.10.430.100">
    <property type="entry name" value="Ribosomal protein L9, C-terminal domain"/>
    <property type="match status" value="1"/>
</dbReference>
<dbReference type="Gene3D" id="3.40.5.10">
    <property type="entry name" value="Ribosomal protein L9, N-terminal domain"/>
    <property type="match status" value="1"/>
</dbReference>
<dbReference type="HAMAP" id="MF_00503">
    <property type="entry name" value="Ribosomal_bL9"/>
    <property type="match status" value="1"/>
</dbReference>
<dbReference type="InterPro" id="IPR000244">
    <property type="entry name" value="Ribosomal_bL9"/>
</dbReference>
<dbReference type="InterPro" id="IPR009027">
    <property type="entry name" value="Ribosomal_bL9/RNase_H1_N"/>
</dbReference>
<dbReference type="InterPro" id="IPR020594">
    <property type="entry name" value="Ribosomal_bL9_bac/chp"/>
</dbReference>
<dbReference type="InterPro" id="IPR020069">
    <property type="entry name" value="Ribosomal_bL9_C"/>
</dbReference>
<dbReference type="InterPro" id="IPR036791">
    <property type="entry name" value="Ribosomal_bL9_C_sf"/>
</dbReference>
<dbReference type="InterPro" id="IPR020070">
    <property type="entry name" value="Ribosomal_bL9_N"/>
</dbReference>
<dbReference type="InterPro" id="IPR036935">
    <property type="entry name" value="Ribosomal_bL9_N_sf"/>
</dbReference>
<dbReference type="NCBIfam" id="TIGR00158">
    <property type="entry name" value="L9"/>
    <property type="match status" value="1"/>
</dbReference>
<dbReference type="PANTHER" id="PTHR21368">
    <property type="entry name" value="50S RIBOSOMAL PROTEIN L9"/>
    <property type="match status" value="1"/>
</dbReference>
<dbReference type="Pfam" id="PF03948">
    <property type="entry name" value="Ribosomal_L9_C"/>
    <property type="match status" value="1"/>
</dbReference>
<dbReference type="Pfam" id="PF01281">
    <property type="entry name" value="Ribosomal_L9_N"/>
    <property type="match status" value="1"/>
</dbReference>
<dbReference type="SUPFAM" id="SSF55658">
    <property type="entry name" value="L9 N-domain-like"/>
    <property type="match status" value="1"/>
</dbReference>
<dbReference type="SUPFAM" id="SSF55653">
    <property type="entry name" value="Ribosomal protein L9 C-domain"/>
    <property type="match status" value="1"/>
</dbReference>
<dbReference type="PROSITE" id="PS00651">
    <property type="entry name" value="RIBOSOMAL_L9"/>
    <property type="match status" value="1"/>
</dbReference>
<name>RL9_ELUMP</name>
<keyword id="KW-1185">Reference proteome</keyword>
<keyword id="KW-0687">Ribonucleoprotein</keyword>
<keyword id="KW-0689">Ribosomal protein</keyword>
<keyword id="KW-0694">RNA-binding</keyword>
<keyword id="KW-0699">rRNA-binding</keyword>
<gene>
    <name evidence="1" type="primary">rplI</name>
    <name type="ordered locus">Emin_1355</name>
</gene>
<protein>
    <recommendedName>
        <fullName evidence="1">Large ribosomal subunit protein bL9</fullName>
    </recommendedName>
    <alternativeName>
        <fullName evidence="2">50S ribosomal protein L9</fullName>
    </alternativeName>
</protein>
<proteinExistence type="inferred from homology"/>
<feature type="chain" id="PRO_1000126912" description="Large ribosomal subunit protein bL9">
    <location>
        <begin position="1"/>
        <end position="152"/>
    </location>
</feature>